<comment type="function">
    <text evidence="1">Allows the formation of correctly charged Asn-tRNA(Asn) or Gln-tRNA(Gln) through the transamidation of misacylated Asp-tRNA(Asn) or Glu-tRNA(Gln) in organisms which lack either or both of asparaginyl-tRNA or glutaminyl-tRNA synthetases. The reaction takes place in the presence of glutamine and ATP through an activated phospho-Asp-tRNA(Asn) or phospho-Glu-tRNA(Gln).</text>
</comment>
<comment type="catalytic activity">
    <reaction evidence="1">
        <text>L-glutamyl-tRNA(Gln) + L-glutamine + ATP + H2O = L-glutaminyl-tRNA(Gln) + L-glutamate + ADP + phosphate + H(+)</text>
        <dbReference type="Rhea" id="RHEA:17521"/>
        <dbReference type="Rhea" id="RHEA-COMP:9681"/>
        <dbReference type="Rhea" id="RHEA-COMP:9684"/>
        <dbReference type="ChEBI" id="CHEBI:15377"/>
        <dbReference type="ChEBI" id="CHEBI:15378"/>
        <dbReference type="ChEBI" id="CHEBI:29985"/>
        <dbReference type="ChEBI" id="CHEBI:30616"/>
        <dbReference type="ChEBI" id="CHEBI:43474"/>
        <dbReference type="ChEBI" id="CHEBI:58359"/>
        <dbReference type="ChEBI" id="CHEBI:78520"/>
        <dbReference type="ChEBI" id="CHEBI:78521"/>
        <dbReference type="ChEBI" id="CHEBI:456216"/>
    </reaction>
</comment>
<comment type="catalytic activity">
    <reaction evidence="1">
        <text>L-aspartyl-tRNA(Asn) + L-glutamine + ATP + H2O = L-asparaginyl-tRNA(Asn) + L-glutamate + ADP + phosphate + 2 H(+)</text>
        <dbReference type="Rhea" id="RHEA:14513"/>
        <dbReference type="Rhea" id="RHEA-COMP:9674"/>
        <dbReference type="Rhea" id="RHEA-COMP:9677"/>
        <dbReference type="ChEBI" id="CHEBI:15377"/>
        <dbReference type="ChEBI" id="CHEBI:15378"/>
        <dbReference type="ChEBI" id="CHEBI:29985"/>
        <dbReference type="ChEBI" id="CHEBI:30616"/>
        <dbReference type="ChEBI" id="CHEBI:43474"/>
        <dbReference type="ChEBI" id="CHEBI:58359"/>
        <dbReference type="ChEBI" id="CHEBI:78515"/>
        <dbReference type="ChEBI" id="CHEBI:78516"/>
        <dbReference type="ChEBI" id="CHEBI:456216"/>
    </reaction>
</comment>
<comment type="subunit">
    <text evidence="1">Heterotrimer of A, B and C subunits.</text>
</comment>
<comment type="similarity">
    <text evidence="1">Belongs to the GatB/GatE family. GatB subfamily.</text>
</comment>
<keyword id="KW-0067">ATP-binding</keyword>
<keyword id="KW-0436">Ligase</keyword>
<keyword id="KW-0547">Nucleotide-binding</keyword>
<keyword id="KW-0648">Protein biosynthesis</keyword>
<sequence length="476" mass="54538">MEFEAVIGLEVHVELLTETKIYCGCSTAFGSEPNKHVCPVCLGLPGSLPRLNKKVVEYAIKAGLALNCSINNKSRMDRKNYFYADCPKNYQITQQEIPICREGFIEIRNHLGEKKRIGIERIHMEEDAGKLIHTDEGTLIDYNRAGIPLIEIVSKPDIRTSKEAVSYLEDLRNILKFIGVSDCKMEQGSLRCDCNISIRPKHNLKLGVKTEIKNMNSFKALEKAIQYEYKRQSDLIESGEKVRQETRRWNDAKNVTEVMRSKEYANDYRYFPEGDLTAINISDNYIDNIRKTIPELPDKKIDRFVEEFKISRKEIEILILNMEIGDFFENAAKLSGDPKSVSNWITGDISRLAKETGIPLNNLNFTERDLAELIEFINCGVISNNIGKKVIEEMFYKGKSPRQIIHEKGFVQNSSKEKILKVVKEVMEENPKSIEDYKKGKKKAVKFMIGMVMKKTKGNANPMLVNKLVEEEIGKY</sequence>
<accession>B9DWL7</accession>
<evidence type="ECO:0000255" key="1">
    <source>
        <dbReference type="HAMAP-Rule" id="MF_00121"/>
    </source>
</evidence>
<protein>
    <recommendedName>
        <fullName evidence="1">Aspartyl/glutamyl-tRNA(Asn/Gln) amidotransferase subunit B</fullName>
        <shortName evidence="1">Asp/Glu-ADT subunit B</shortName>
        <ecNumber evidence="1">6.3.5.-</ecNumber>
    </recommendedName>
</protein>
<reference key="1">
    <citation type="submission" date="2005-09" db="EMBL/GenBank/DDBJ databases">
        <title>Complete genome sequence of Clostridium kluyveri and comparative genomics of Clostridia species.</title>
        <authorList>
            <person name="Inui M."/>
            <person name="Nonaka H."/>
            <person name="Shinoda Y."/>
            <person name="Ikenaga Y."/>
            <person name="Abe M."/>
            <person name="Naito K."/>
            <person name="Vertes A.A."/>
            <person name="Yukawa H."/>
        </authorList>
    </citation>
    <scope>NUCLEOTIDE SEQUENCE [LARGE SCALE GENOMIC DNA]</scope>
    <source>
        <strain>NBRC 12016</strain>
    </source>
</reference>
<proteinExistence type="inferred from homology"/>
<name>GATB_CLOK1</name>
<gene>
    <name evidence="1" type="primary">gatB</name>
    <name type="ordered locus">CKR_3059</name>
</gene>
<organism>
    <name type="scientific">Clostridium kluyveri (strain NBRC 12016)</name>
    <dbReference type="NCBI Taxonomy" id="583346"/>
    <lineage>
        <taxon>Bacteria</taxon>
        <taxon>Bacillati</taxon>
        <taxon>Bacillota</taxon>
        <taxon>Clostridia</taxon>
        <taxon>Eubacteriales</taxon>
        <taxon>Clostridiaceae</taxon>
        <taxon>Clostridium</taxon>
    </lineage>
</organism>
<dbReference type="EC" id="6.3.5.-" evidence="1"/>
<dbReference type="EMBL" id="AP009049">
    <property type="protein sequence ID" value="BAH08110.1"/>
    <property type="molecule type" value="Genomic_DNA"/>
</dbReference>
<dbReference type="RefSeq" id="WP_012103792.1">
    <property type="nucleotide sequence ID" value="NC_011837.1"/>
</dbReference>
<dbReference type="SMR" id="B9DWL7"/>
<dbReference type="KEGG" id="ckr:CKR_3059"/>
<dbReference type="HOGENOM" id="CLU_019240_0_0_9"/>
<dbReference type="Proteomes" id="UP000007969">
    <property type="component" value="Chromosome"/>
</dbReference>
<dbReference type="GO" id="GO:0050566">
    <property type="term" value="F:asparaginyl-tRNA synthase (glutamine-hydrolyzing) activity"/>
    <property type="evidence" value="ECO:0007669"/>
    <property type="project" value="RHEA"/>
</dbReference>
<dbReference type="GO" id="GO:0005524">
    <property type="term" value="F:ATP binding"/>
    <property type="evidence" value="ECO:0007669"/>
    <property type="project" value="UniProtKB-KW"/>
</dbReference>
<dbReference type="GO" id="GO:0050567">
    <property type="term" value="F:glutaminyl-tRNA synthase (glutamine-hydrolyzing) activity"/>
    <property type="evidence" value="ECO:0007669"/>
    <property type="project" value="UniProtKB-UniRule"/>
</dbReference>
<dbReference type="GO" id="GO:0070681">
    <property type="term" value="P:glutaminyl-tRNAGln biosynthesis via transamidation"/>
    <property type="evidence" value="ECO:0007669"/>
    <property type="project" value="TreeGrafter"/>
</dbReference>
<dbReference type="GO" id="GO:0006412">
    <property type="term" value="P:translation"/>
    <property type="evidence" value="ECO:0007669"/>
    <property type="project" value="UniProtKB-UniRule"/>
</dbReference>
<dbReference type="FunFam" id="1.10.10.410:FF:000001">
    <property type="entry name" value="Aspartyl/glutamyl-tRNA(Asn/Gln) amidotransferase subunit B"/>
    <property type="match status" value="1"/>
</dbReference>
<dbReference type="Gene3D" id="1.10.10.410">
    <property type="match status" value="1"/>
</dbReference>
<dbReference type="Gene3D" id="1.10.150.380">
    <property type="entry name" value="GatB domain, N-terminal subdomain"/>
    <property type="match status" value="1"/>
</dbReference>
<dbReference type="HAMAP" id="MF_00121">
    <property type="entry name" value="GatB"/>
    <property type="match status" value="1"/>
</dbReference>
<dbReference type="InterPro" id="IPR017959">
    <property type="entry name" value="Asn/Gln-tRNA_amidoTrfase_suB/E"/>
</dbReference>
<dbReference type="InterPro" id="IPR006075">
    <property type="entry name" value="Asn/Gln-tRNA_Trfase_suB/E_cat"/>
</dbReference>
<dbReference type="InterPro" id="IPR018027">
    <property type="entry name" value="Asn/Gln_amidotransferase"/>
</dbReference>
<dbReference type="InterPro" id="IPR003789">
    <property type="entry name" value="Asn/Gln_tRNA_amidoTrase-B-like"/>
</dbReference>
<dbReference type="InterPro" id="IPR004413">
    <property type="entry name" value="GatB"/>
</dbReference>
<dbReference type="InterPro" id="IPR042114">
    <property type="entry name" value="GatB_C_1"/>
</dbReference>
<dbReference type="InterPro" id="IPR023168">
    <property type="entry name" value="GatB_Yqey_C_2"/>
</dbReference>
<dbReference type="InterPro" id="IPR017958">
    <property type="entry name" value="Gln-tRNA_amidoTrfase_suB_CS"/>
</dbReference>
<dbReference type="InterPro" id="IPR014746">
    <property type="entry name" value="Gln_synth/guanido_kin_cat_dom"/>
</dbReference>
<dbReference type="NCBIfam" id="TIGR00133">
    <property type="entry name" value="gatB"/>
    <property type="match status" value="1"/>
</dbReference>
<dbReference type="NCBIfam" id="NF004012">
    <property type="entry name" value="PRK05477.1-2"/>
    <property type="match status" value="1"/>
</dbReference>
<dbReference type="NCBIfam" id="NF004014">
    <property type="entry name" value="PRK05477.1-4"/>
    <property type="match status" value="1"/>
</dbReference>
<dbReference type="PANTHER" id="PTHR11659">
    <property type="entry name" value="GLUTAMYL-TRNA GLN AMIDOTRANSFERASE SUBUNIT B MITOCHONDRIAL AND PROKARYOTIC PET112-RELATED"/>
    <property type="match status" value="1"/>
</dbReference>
<dbReference type="PANTHER" id="PTHR11659:SF0">
    <property type="entry name" value="GLUTAMYL-TRNA(GLN) AMIDOTRANSFERASE SUBUNIT B, MITOCHONDRIAL"/>
    <property type="match status" value="1"/>
</dbReference>
<dbReference type="Pfam" id="PF02934">
    <property type="entry name" value="GatB_N"/>
    <property type="match status" value="1"/>
</dbReference>
<dbReference type="Pfam" id="PF02637">
    <property type="entry name" value="GatB_Yqey"/>
    <property type="match status" value="1"/>
</dbReference>
<dbReference type="SMART" id="SM00845">
    <property type="entry name" value="GatB_Yqey"/>
    <property type="match status" value="1"/>
</dbReference>
<dbReference type="SUPFAM" id="SSF89095">
    <property type="entry name" value="GatB/YqeY motif"/>
    <property type="match status" value="1"/>
</dbReference>
<dbReference type="SUPFAM" id="SSF55931">
    <property type="entry name" value="Glutamine synthetase/guanido kinase"/>
    <property type="match status" value="1"/>
</dbReference>
<dbReference type="PROSITE" id="PS01234">
    <property type="entry name" value="GATB"/>
    <property type="match status" value="1"/>
</dbReference>
<feature type="chain" id="PRO_1000122517" description="Aspartyl/glutamyl-tRNA(Asn/Gln) amidotransferase subunit B">
    <location>
        <begin position="1"/>
        <end position="476"/>
    </location>
</feature>